<name>RIMO_PROA2</name>
<proteinExistence type="inferred from homology"/>
<protein>
    <recommendedName>
        <fullName evidence="1">Ribosomal protein uS12 methylthiotransferase RimO</fullName>
        <shortName evidence="1">uS12 MTTase</shortName>
        <shortName evidence="1">uS12 methylthiotransferase</shortName>
        <ecNumber evidence="1">2.8.4.4</ecNumber>
    </recommendedName>
    <alternativeName>
        <fullName evidence="1">Ribosomal protein uS12 (aspartate-C(3))-methylthiotransferase</fullName>
    </alternativeName>
    <alternativeName>
        <fullName evidence="1">Ribosome maturation factor RimO</fullName>
    </alternativeName>
</protein>
<keyword id="KW-0004">4Fe-4S</keyword>
<keyword id="KW-0963">Cytoplasm</keyword>
<keyword id="KW-0408">Iron</keyword>
<keyword id="KW-0411">Iron-sulfur</keyword>
<keyword id="KW-0479">Metal-binding</keyword>
<keyword id="KW-0949">S-adenosyl-L-methionine</keyword>
<keyword id="KW-0808">Transferase</keyword>
<gene>
    <name evidence="1" type="primary">rimO</name>
    <name type="ordered locus">Paes_1513</name>
</gene>
<accession>B4S8Z6</accession>
<feature type="chain" id="PRO_0000374936" description="Ribosomal protein uS12 methylthiotransferase RimO">
    <location>
        <begin position="1"/>
        <end position="433"/>
    </location>
</feature>
<feature type="domain" description="MTTase N-terminal" evidence="1">
    <location>
        <begin position="6"/>
        <end position="122"/>
    </location>
</feature>
<feature type="domain" description="Radical SAM core" evidence="2">
    <location>
        <begin position="132"/>
        <end position="362"/>
    </location>
</feature>
<feature type="domain" description="TRAM" evidence="1">
    <location>
        <begin position="365"/>
        <end position="432"/>
    </location>
</feature>
<feature type="binding site" evidence="1">
    <location>
        <position position="15"/>
    </location>
    <ligand>
        <name>[4Fe-4S] cluster</name>
        <dbReference type="ChEBI" id="CHEBI:49883"/>
        <label>1</label>
    </ligand>
</feature>
<feature type="binding site" evidence="1">
    <location>
        <position position="51"/>
    </location>
    <ligand>
        <name>[4Fe-4S] cluster</name>
        <dbReference type="ChEBI" id="CHEBI:49883"/>
        <label>1</label>
    </ligand>
</feature>
<feature type="binding site" evidence="1">
    <location>
        <position position="85"/>
    </location>
    <ligand>
        <name>[4Fe-4S] cluster</name>
        <dbReference type="ChEBI" id="CHEBI:49883"/>
        <label>1</label>
    </ligand>
</feature>
<feature type="binding site" evidence="1">
    <location>
        <position position="146"/>
    </location>
    <ligand>
        <name>[4Fe-4S] cluster</name>
        <dbReference type="ChEBI" id="CHEBI:49883"/>
        <label>2</label>
        <note>4Fe-4S-S-AdoMet</note>
    </ligand>
</feature>
<feature type="binding site" evidence="1">
    <location>
        <position position="150"/>
    </location>
    <ligand>
        <name>[4Fe-4S] cluster</name>
        <dbReference type="ChEBI" id="CHEBI:49883"/>
        <label>2</label>
        <note>4Fe-4S-S-AdoMet</note>
    </ligand>
</feature>
<feature type="binding site" evidence="1">
    <location>
        <position position="153"/>
    </location>
    <ligand>
        <name>[4Fe-4S] cluster</name>
        <dbReference type="ChEBI" id="CHEBI:49883"/>
        <label>2</label>
        <note>4Fe-4S-S-AdoMet</note>
    </ligand>
</feature>
<sequence length="433" mass="49501">MKNIMQSIFLLSLGCSKNTVDSERLIRQAELNGLHFTDQADDADIIIINTCGFIADAKEESINEILAATEKRHNGEIKALFVMGCLSALYSRELRAELPEVDHFFGTSDLEEIISVLGGSYRPSNIHERTLLTPPHYAWLKIAEGCSRTCSFCAIPKMRGRYRSEPIERLEKEASLLLKNGVRELNIISQDITQYGWDFDERSHLNDLLKKLAAQEFSWIRLLYAYPLHFPLDVIDTMREHANICNYLDMPVQHISDRILKSMQRGIDKKGTIGLLESIRKKNPDIRLRTTMIVGYPGETDREFDELLEFVAQLRFDRLGCFPYSHEEHTSAFKHLEDDIPEKIKKERVEALMELQESIAAERNRELEGRVMKVLVDEVEGSIAYARTEYDAPEVDNDVLVDIGDNPVQPGDFCTVTIEESSAYELHGRVNDC</sequence>
<comment type="function">
    <text evidence="1">Catalyzes the methylthiolation of an aspartic acid residue of ribosomal protein uS12.</text>
</comment>
<comment type="catalytic activity">
    <reaction evidence="1">
        <text>L-aspartate(89)-[ribosomal protein uS12]-hydrogen + (sulfur carrier)-SH + AH2 + 2 S-adenosyl-L-methionine = 3-methylsulfanyl-L-aspartate(89)-[ribosomal protein uS12]-hydrogen + (sulfur carrier)-H + 5'-deoxyadenosine + L-methionine + A + S-adenosyl-L-homocysteine + 2 H(+)</text>
        <dbReference type="Rhea" id="RHEA:37087"/>
        <dbReference type="Rhea" id="RHEA-COMP:10460"/>
        <dbReference type="Rhea" id="RHEA-COMP:10461"/>
        <dbReference type="Rhea" id="RHEA-COMP:14737"/>
        <dbReference type="Rhea" id="RHEA-COMP:14739"/>
        <dbReference type="ChEBI" id="CHEBI:13193"/>
        <dbReference type="ChEBI" id="CHEBI:15378"/>
        <dbReference type="ChEBI" id="CHEBI:17319"/>
        <dbReference type="ChEBI" id="CHEBI:17499"/>
        <dbReference type="ChEBI" id="CHEBI:29917"/>
        <dbReference type="ChEBI" id="CHEBI:29961"/>
        <dbReference type="ChEBI" id="CHEBI:57844"/>
        <dbReference type="ChEBI" id="CHEBI:57856"/>
        <dbReference type="ChEBI" id="CHEBI:59789"/>
        <dbReference type="ChEBI" id="CHEBI:64428"/>
        <dbReference type="ChEBI" id="CHEBI:73599"/>
        <dbReference type="EC" id="2.8.4.4"/>
    </reaction>
</comment>
<comment type="cofactor">
    <cofactor evidence="1">
        <name>[4Fe-4S] cluster</name>
        <dbReference type="ChEBI" id="CHEBI:49883"/>
    </cofactor>
    <text evidence="1">Binds 2 [4Fe-4S] clusters. One cluster is coordinated with 3 cysteines and an exchangeable S-adenosyl-L-methionine.</text>
</comment>
<comment type="subcellular location">
    <subcellularLocation>
        <location evidence="1">Cytoplasm</location>
    </subcellularLocation>
</comment>
<comment type="similarity">
    <text evidence="1">Belongs to the methylthiotransferase family. RimO subfamily.</text>
</comment>
<evidence type="ECO:0000255" key="1">
    <source>
        <dbReference type="HAMAP-Rule" id="MF_01865"/>
    </source>
</evidence>
<evidence type="ECO:0000255" key="2">
    <source>
        <dbReference type="PROSITE-ProRule" id="PRU01266"/>
    </source>
</evidence>
<organism>
    <name type="scientific">Prosthecochloris aestuarii (strain DSM 271 / SK 413)</name>
    <dbReference type="NCBI Taxonomy" id="290512"/>
    <lineage>
        <taxon>Bacteria</taxon>
        <taxon>Pseudomonadati</taxon>
        <taxon>Chlorobiota</taxon>
        <taxon>Chlorobiia</taxon>
        <taxon>Chlorobiales</taxon>
        <taxon>Chlorobiaceae</taxon>
        <taxon>Prosthecochloris</taxon>
    </lineage>
</organism>
<dbReference type="EC" id="2.8.4.4" evidence="1"/>
<dbReference type="EMBL" id="CP001108">
    <property type="protein sequence ID" value="ACF46533.1"/>
    <property type="molecule type" value="Genomic_DNA"/>
</dbReference>
<dbReference type="RefSeq" id="WP_012506066.1">
    <property type="nucleotide sequence ID" value="NC_011059.1"/>
</dbReference>
<dbReference type="SMR" id="B4S8Z6"/>
<dbReference type="STRING" id="290512.Paes_1513"/>
<dbReference type="KEGG" id="paa:Paes_1513"/>
<dbReference type="eggNOG" id="COG0621">
    <property type="taxonomic scope" value="Bacteria"/>
</dbReference>
<dbReference type="HOGENOM" id="CLU_018697_0_1_10"/>
<dbReference type="Proteomes" id="UP000002725">
    <property type="component" value="Chromosome"/>
</dbReference>
<dbReference type="GO" id="GO:0005829">
    <property type="term" value="C:cytosol"/>
    <property type="evidence" value="ECO:0007669"/>
    <property type="project" value="TreeGrafter"/>
</dbReference>
<dbReference type="GO" id="GO:0051539">
    <property type="term" value="F:4 iron, 4 sulfur cluster binding"/>
    <property type="evidence" value="ECO:0007669"/>
    <property type="project" value="UniProtKB-UniRule"/>
</dbReference>
<dbReference type="GO" id="GO:0035599">
    <property type="term" value="F:aspartic acid methylthiotransferase activity"/>
    <property type="evidence" value="ECO:0007669"/>
    <property type="project" value="TreeGrafter"/>
</dbReference>
<dbReference type="GO" id="GO:0046872">
    <property type="term" value="F:metal ion binding"/>
    <property type="evidence" value="ECO:0007669"/>
    <property type="project" value="UniProtKB-KW"/>
</dbReference>
<dbReference type="GO" id="GO:0103039">
    <property type="term" value="F:protein methylthiotransferase activity"/>
    <property type="evidence" value="ECO:0007669"/>
    <property type="project" value="UniProtKB-EC"/>
</dbReference>
<dbReference type="GO" id="GO:0006400">
    <property type="term" value="P:tRNA modification"/>
    <property type="evidence" value="ECO:0007669"/>
    <property type="project" value="InterPro"/>
</dbReference>
<dbReference type="CDD" id="cd01335">
    <property type="entry name" value="Radical_SAM"/>
    <property type="match status" value="1"/>
</dbReference>
<dbReference type="FunFam" id="3.80.30.20:FF:000001">
    <property type="entry name" value="tRNA-2-methylthio-N(6)-dimethylallyladenosine synthase 2"/>
    <property type="match status" value="1"/>
</dbReference>
<dbReference type="Gene3D" id="3.40.50.12160">
    <property type="entry name" value="Methylthiotransferase, N-terminal domain"/>
    <property type="match status" value="1"/>
</dbReference>
<dbReference type="Gene3D" id="2.40.50.140">
    <property type="entry name" value="Nucleic acid-binding proteins"/>
    <property type="match status" value="1"/>
</dbReference>
<dbReference type="Gene3D" id="3.80.30.20">
    <property type="entry name" value="tm_1862 like domain"/>
    <property type="match status" value="1"/>
</dbReference>
<dbReference type="HAMAP" id="MF_01865">
    <property type="entry name" value="MTTase_RimO"/>
    <property type="match status" value="1"/>
</dbReference>
<dbReference type="InterPro" id="IPR006638">
    <property type="entry name" value="Elp3/MiaA/NifB-like_rSAM"/>
</dbReference>
<dbReference type="InterPro" id="IPR005839">
    <property type="entry name" value="Methylthiotransferase"/>
</dbReference>
<dbReference type="InterPro" id="IPR020612">
    <property type="entry name" value="Methylthiotransferase_CS"/>
</dbReference>
<dbReference type="InterPro" id="IPR013848">
    <property type="entry name" value="Methylthiotransferase_N"/>
</dbReference>
<dbReference type="InterPro" id="IPR038135">
    <property type="entry name" value="Methylthiotransferase_N_sf"/>
</dbReference>
<dbReference type="InterPro" id="IPR012340">
    <property type="entry name" value="NA-bd_OB-fold"/>
</dbReference>
<dbReference type="InterPro" id="IPR005840">
    <property type="entry name" value="Ribosomal_uS12_MeSTrfase_RimO"/>
</dbReference>
<dbReference type="InterPro" id="IPR007197">
    <property type="entry name" value="rSAM"/>
</dbReference>
<dbReference type="InterPro" id="IPR023404">
    <property type="entry name" value="rSAM_horseshoe"/>
</dbReference>
<dbReference type="InterPro" id="IPR002792">
    <property type="entry name" value="TRAM_dom"/>
</dbReference>
<dbReference type="NCBIfam" id="TIGR01125">
    <property type="entry name" value="30S ribosomal protein S12 methylthiotransferase RimO"/>
    <property type="match status" value="1"/>
</dbReference>
<dbReference type="NCBIfam" id="TIGR00089">
    <property type="entry name" value="MiaB/RimO family radical SAM methylthiotransferase"/>
    <property type="match status" value="1"/>
</dbReference>
<dbReference type="PANTHER" id="PTHR43837">
    <property type="entry name" value="RIBOSOMAL PROTEIN S12 METHYLTHIOTRANSFERASE RIMO"/>
    <property type="match status" value="1"/>
</dbReference>
<dbReference type="PANTHER" id="PTHR43837:SF1">
    <property type="entry name" value="RIBOSOMAL PROTEIN US12 METHYLTHIOTRANSFERASE RIMO"/>
    <property type="match status" value="1"/>
</dbReference>
<dbReference type="Pfam" id="PF04055">
    <property type="entry name" value="Radical_SAM"/>
    <property type="match status" value="1"/>
</dbReference>
<dbReference type="Pfam" id="PF18693">
    <property type="entry name" value="TRAM_2"/>
    <property type="match status" value="1"/>
</dbReference>
<dbReference type="Pfam" id="PF00919">
    <property type="entry name" value="UPF0004"/>
    <property type="match status" value="1"/>
</dbReference>
<dbReference type="SFLD" id="SFLDG01082">
    <property type="entry name" value="B12-binding_domain_containing"/>
    <property type="match status" value="1"/>
</dbReference>
<dbReference type="SFLD" id="SFLDG01061">
    <property type="entry name" value="methylthiotransferase"/>
    <property type="match status" value="1"/>
</dbReference>
<dbReference type="SFLD" id="SFLDF00274">
    <property type="entry name" value="ribosomal_protein_S12_methylth"/>
    <property type="match status" value="1"/>
</dbReference>
<dbReference type="SMART" id="SM00729">
    <property type="entry name" value="Elp3"/>
    <property type="match status" value="1"/>
</dbReference>
<dbReference type="SUPFAM" id="SSF102114">
    <property type="entry name" value="Radical SAM enzymes"/>
    <property type="match status" value="1"/>
</dbReference>
<dbReference type="PROSITE" id="PS51449">
    <property type="entry name" value="MTTASE_N"/>
    <property type="match status" value="1"/>
</dbReference>
<dbReference type="PROSITE" id="PS01278">
    <property type="entry name" value="MTTASE_RADICAL"/>
    <property type="match status" value="1"/>
</dbReference>
<dbReference type="PROSITE" id="PS51918">
    <property type="entry name" value="RADICAL_SAM"/>
    <property type="match status" value="1"/>
</dbReference>
<dbReference type="PROSITE" id="PS50926">
    <property type="entry name" value="TRAM"/>
    <property type="match status" value="1"/>
</dbReference>
<reference key="1">
    <citation type="submission" date="2008-06" db="EMBL/GenBank/DDBJ databases">
        <title>Complete sequence of chromosome of Prosthecochloris aestuarii DSM 271.</title>
        <authorList>
            <consortium name="US DOE Joint Genome Institute"/>
            <person name="Lucas S."/>
            <person name="Copeland A."/>
            <person name="Lapidus A."/>
            <person name="Glavina del Rio T."/>
            <person name="Dalin E."/>
            <person name="Tice H."/>
            <person name="Bruce D."/>
            <person name="Goodwin L."/>
            <person name="Pitluck S."/>
            <person name="Schmutz J."/>
            <person name="Larimer F."/>
            <person name="Land M."/>
            <person name="Hauser L."/>
            <person name="Kyrpides N."/>
            <person name="Anderson I."/>
            <person name="Liu Z."/>
            <person name="Li T."/>
            <person name="Zhao F."/>
            <person name="Overmann J."/>
            <person name="Bryant D.A."/>
            <person name="Richardson P."/>
        </authorList>
    </citation>
    <scope>NUCLEOTIDE SEQUENCE [LARGE SCALE GENOMIC DNA]</scope>
    <source>
        <strain>DSM 271 / SK 413</strain>
    </source>
</reference>